<organism>
    <name type="scientific">Homo sapiens</name>
    <name type="common">Human</name>
    <dbReference type="NCBI Taxonomy" id="9606"/>
    <lineage>
        <taxon>Eukaryota</taxon>
        <taxon>Metazoa</taxon>
        <taxon>Chordata</taxon>
        <taxon>Craniata</taxon>
        <taxon>Vertebrata</taxon>
        <taxon>Euteleostomi</taxon>
        <taxon>Mammalia</taxon>
        <taxon>Eutheria</taxon>
        <taxon>Euarchontoglires</taxon>
        <taxon>Primates</taxon>
        <taxon>Haplorrhini</taxon>
        <taxon>Catarrhini</taxon>
        <taxon>Hominidae</taxon>
        <taxon>Homo</taxon>
    </lineage>
</organism>
<feature type="chain" id="PRO_0000257969" description="ETS homologous factor">
    <location>
        <begin position="1"/>
        <end position="300"/>
    </location>
</feature>
<feature type="domain" description="PNT" evidence="4">
    <location>
        <begin position="29"/>
        <end position="115"/>
    </location>
</feature>
<feature type="DNA-binding region" description="ETS" evidence="3">
    <location>
        <begin position="207"/>
        <end position="289"/>
    </location>
</feature>
<feature type="region of interest" description="Disordered" evidence="5">
    <location>
        <begin position="183"/>
        <end position="202"/>
    </location>
</feature>
<feature type="compositionally biased region" description="Basic and acidic residues" evidence="5">
    <location>
        <begin position="185"/>
        <end position="195"/>
    </location>
</feature>
<feature type="splice variant" id="VSP_046373" description="In isoform 3." evidence="13">
    <original>M</original>
    <variation>MGLPERRGLVLLLSLAEILFKIM</variation>
    <location>
        <position position="1"/>
    </location>
</feature>
<feature type="splice variant" id="VSP_052190" description="In isoform 2." evidence="12">
    <location>
        <begin position="159"/>
        <end position="181"/>
    </location>
</feature>
<feature type="sequence variant" id="VAR_048941" description="In dbSNP:rs9804460.">
    <original>A</original>
    <variation>V</variation>
    <location>
        <position position="96"/>
    </location>
</feature>
<feature type="sequence conflict" description="In Ref. 2; AAD30990/AAD30991." evidence="14" ref="2">
    <original>G</original>
    <variation>S</variation>
    <location>
        <position position="40"/>
    </location>
</feature>
<feature type="sequence conflict" description="In Ref. 2; AAD30991." evidence="14" ref="2">
    <original>S</original>
    <variation>G</variation>
    <location>
        <position position="163"/>
    </location>
</feature>
<feature type="sequence conflict" description="In Ref. 2; AAD30991." evidence="14" ref="2">
    <original>A</original>
    <variation>V</variation>
    <location>
        <position position="169"/>
    </location>
</feature>
<feature type="sequence conflict" description="In Ref. 1; AAF06998." evidence="14" ref="1">
    <original>K</original>
    <variation>E</variation>
    <location>
        <position position="196"/>
    </location>
</feature>
<sequence>MILEGGGVMNLNPGNNLLHQPPAWTDSYSTCNVSSGFFGGQWHEIHPQYWTKYQVWEWLQHLLDTNQLDANCIPFQEFDINGEHLCSMSLQEFTRAAGTAGQLLYSNLQHLKWNGQCSSDLFQSTHNVIVKTEQTEPSIMNTWKDENYLYDTNYGSTVDLLDSKTFCRAQISMTTTSHLPVAESPDMKKEQDPPAKCHTKKHNPRGTHLWEFIRDILLNPDKNPGLIKWEDRSEGVFRFLKSEAVAQLWGKKKNNSSMTYEKLSRAMRYYYKREILERVDGRRLVYKFGKNARGWRENEN</sequence>
<reference evidence="14 16 23" key="1">
    <citation type="journal article" date="1999" name="Biochem. Biophys. Res. Commun.">
        <title>Human chromosomal localization, tissue/tumor expression, and regulatory function of the ets family gene EHF.</title>
        <authorList>
            <person name="Kleinbaum L.A."/>
            <person name="Duggan C."/>
            <person name="Ferreira E."/>
            <person name="Coffey G.P."/>
            <person name="Buttice G."/>
            <person name="Burton F.H."/>
        </authorList>
    </citation>
    <scope>NUCLEOTIDE SEQUENCE [MRNA] (ISOFORM 1)</scope>
    <scope>FUNCTION</scope>
    <scope>ALTERNATIVE SPLICING (ISOFORM 2)</scope>
    <scope>TISSUE SPECIFICITY</scope>
    <source>
        <tissue evidence="16">Prostate</tissue>
    </source>
</reference>
<reference evidence="14 15" key="2">
    <citation type="journal article" date="2000" name="J. Biol. Chem.">
        <title>ESE-3, a novel member of an epithelium-specific ets transcription factor subfamily, demonstrates different target gene specificity from ESE-1.</title>
        <authorList>
            <person name="Kas K."/>
            <person name="Finger E."/>
            <person name="Grall F."/>
            <person name="Gu X."/>
            <person name="Akbarali Y."/>
            <person name="Boltax J."/>
            <person name="Weiss A."/>
            <person name="Oettgen P."/>
            <person name="Kapeller R."/>
            <person name="Libermann T.A."/>
        </authorList>
    </citation>
    <scope>NUCLEOTIDE SEQUENCE [MRNA] (ISOFORMS 1 AND 2)</scope>
    <scope>FUNCTION</scope>
    <scope>TISSUE SPECIFICITY</scope>
    <source>
        <tissue evidence="15">Prostate</tissue>
    </source>
</reference>
<reference evidence="14 17" key="3">
    <citation type="journal article" date="2001" name="J. Biol. Chem.">
        <title>The epithelium-specific ETS protein EHF/ESE-3 is a context-dependent transcriptional repressor downstream of MAPK signaling cascades.</title>
        <authorList>
            <person name="Tugores A."/>
            <person name="Le J."/>
            <person name="Sorokina I."/>
            <person name="Snijders A.J."/>
            <person name="Duyao M."/>
            <person name="Reddy P.S."/>
            <person name="Carlee L."/>
            <person name="Ronshaugen M."/>
            <person name="Mushegian A."/>
            <person name="Watanaskul T."/>
            <person name="Chu S."/>
            <person name="Buckler A."/>
            <person name="Emtage S."/>
            <person name="McCormick M.K."/>
        </authorList>
    </citation>
    <scope>NUCLEOTIDE SEQUENCE [MRNA] (ISOFORM 1)</scope>
    <scope>FUNCTION</scope>
    <scope>SUBCELLULAR LOCATION</scope>
    <scope>TISSUE SPECIFICITY</scope>
</reference>
<reference evidence="14 18" key="4">
    <citation type="submission" date="1999-11" db="EMBL/GenBank/DDBJ databases">
        <title>Up-regulation of the epithelial-specific transcription factor Genes hEHF and ESX in advanced prostate cancer.</title>
        <authorList>
            <person name="Mitchell S.C."/>
            <person name="Levin E."/>
            <person name="Hubert R."/>
            <person name="Yeramian C."/>
            <person name="Saffran D.C."/>
            <person name="Afar D.E.H."/>
        </authorList>
    </citation>
    <scope>NUCLEOTIDE SEQUENCE [MRNA] (ISOFORM 1)</scope>
</reference>
<reference evidence="14 18" key="5">
    <citation type="submission" date="2005-01" db="EMBL/GenBank/DDBJ databases">
        <title>New human ESE3B coding sequence from H441 cells.</title>
        <authorList>
            <person name="Lei W."/>
            <person name="Harrod K.S."/>
        </authorList>
    </citation>
    <scope>NUCLEOTIDE SEQUENCE [MRNA] (ISOFORM 1)</scope>
</reference>
<reference key="6">
    <citation type="journal article" date="2004" name="Nat. Genet.">
        <title>Complete sequencing and characterization of 21,243 full-length human cDNAs.</title>
        <authorList>
            <person name="Ota T."/>
            <person name="Suzuki Y."/>
            <person name="Nishikawa T."/>
            <person name="Otsuki T."/>
            <person name="Sugiyama T."/>
            <person name="Irie R."/>
            <person name="Wakamatsu A."/>
            <person name="Hayashi K."/>
            <person name="Sato H."/>
            <person name="Nagai K."/>
            <person name="Kimura K."/>
            <person name="Makita H."/>
            <person name="Sekine M."/>
            <person name="Obayashi M."/>
            <person name="Nishi T."/>
            <person name="Shibahara T."/>
            <person name="Tanaka T."/>
            <person name="Ishii S."/>
            <person name="Yamamoto J."/>
            <person name="Saito K."/>
            <person name="Kawai Y."/>
            <person name="Isono Y."/>
            <person name="Nakamura Y."/>
            <person name="Nagahari K."/>
            <person name="Murakami K."/>
            <person name="Yasuda T."/>
            <person name="Iwayanagi T."/>
            <person name="Wagatsuma M."/>
            <person name="Shiratori A."/>
            <person name="Sudo H."/>
            <person name="Hosoiri T."/>
            <person name="Kaku Y."/>
            <person name="Kodaira H."/>
            <person name="Kondo H."/>
            <person name="Sugawara M."/>
            <person name="Takahashi M."/>
            <person name="Kanda K."/>
            <person name="Yokoi T."/>
            <person name="Furuya T."/>
            <person name="Kikkawa E."/>
            <person name="Omura Y."/>
            <person name="Abe K."/>
            <person name="Kamihara K."/>
            <person name="Katsuta N."/>
            <person name="Sato K."/>
            <person name="Tanikawa M."/>
            <person name="Yamazaki M."/>
            <person name="Ninomiya K."/>
            <person name="Ishibashi T."/>
            <person name="Yamashita H."/>
            <person name="Murakawa K."/>
            <person name="Fujimori K."/>
            <person name="Tanai H."/>
            <person name="Kimata M."/>
            <person name="Watanabe M."/>
            <person name="Hiraoka S."/>
            <person name="Chiba Y."/>
            <person name="Ishida S."/>
            <person name="Ono Y."/>
            <person name="Takiguchi S."/>
            <person name="Watanabe S."/>
            <person name="Yosida M."/>
            <person name="Hotuta T."/>
            <person name="Kusano J."/>
            <person name="Kanehori K."/>
            <person name="Takahashi-Fujii A."/>
            <person name="Hara H."/>
            <person name="Tanase T.-O."/>
            <person name="Nomura Y."/>
            <person name="Togiya S."/>
            <person name="Komai F."/>
            <person name="Hara R."/>
            <person name="Takeuchi K."/>
            <person name="Arita M."/>
            <person name="Imose N."/>
            <person name="Musashino K."/>
            <person name="Yuuki H."/>
            <person name="Oshima A."/>
            <person name="Sasaki N."/>
            <person name="Aotsuka S."/>
            <person name="Yoshikawa Y."/>
            <person name="Matsunawa H."/>
            <person name="Ichihara T."/>
            <person name="Shiohata N."/>
            <person name="Sano S."/>
            <person name="Moriya S."/>
            <person name="Momiyama H."/>
            <person name="Satoh N."/>
            <person name="Takami S."/>
            <person name="Terashima Y."/>
            <person name="Suzuki O."/>
            <person name="Nakagawa S."/>
            <person name="Senoh A."/>
            <person name="Mizoguchi H."/>
            <person name="Goto Y."/>
            <person name="Shimizu F."/>
            <person name="Wakebe H."/>
            <person name="Hishigaki H."/>
            <person name="Watanabe T."/>
            <person name="Sugiyama A."/>
            <person name="Takemoto M."/>
            <person name="Kawakami B."/>
            <person name="Yamazaki M."/>
            <person name="Watanabe K."/>
            <person name="Kumagai A."/>
            <person name="Itakura S."/>
            <person name="Fukuzumi Y."/>
            <person name="Fujimori Y."/>
            <person name="Komiyama M."/>
            <person name="Tashiro H."/>
            <person name="Tanigami A."/>
            <person name="Fujiwara T."/>
            <person name="Ono T."/>
            <person name="Yamada K."/>
            <person name="Fujii Y."/>
            <person name="Ozaki K."/>
            <person name="Hirao M."/>
            <person name="Ohmori Y."/>
            <person name="Kawabata A."/>
            <person name="Hikiji T."/>
            <person name="Kobatake N."/>
            <person name="Inagaki H."/>
            <person name="Ikema Y."/>
            <person name="Okamoto S."/>
            <person name="Okitani R."/>
            <person name="Kawakami T."/>
            <person name="Noguchi S."/>
            <person name="Itoh T."/>
            <person name="Shigeta K."/>
            <person name="Senba T."/>
            <person name="Matsumura K."/>
            <person name="Nakajima Y."/>
            <person name="Mizuno T."/>
            <person name="Morinaga M."/>
            <person name="Sasaki M."/>
            <person name="Togashi T."/>
            <person name="Oyama M."/>
            <person name="Hata H."/>
            <person name="Watanabe M."/>
            <person name="Komatsu T."/>
            <person name="Mizushima-Sugano J."/>
            <person name="Satoh T."/>
            <person name="Shirai Y."/>
            <person name="Takahashi Y."/>
            <person name="Nakagawa K."/>
            <person name="Okumura K."/>
            <person name="Nagase T."/>
            <person name="Nomura N."/>
            <person name="Kikuchi H."/>
            <person name="Masuho Y."/>
            <person name="Yamashita R."/>
            <person name="Nakai K."/>
            <person name="Yada T."/>
            <person name="Nakamura Y."/>
            <person name="Ohara O."/>
            <person name="Isogai T."/>
            <person name="Sugano S."/>
        </authorList>
    </citation>
    <scope>NUCLEOTIDE SEQUENCE [LARGE SCALE MRNA] (ISOFORM 3)</scope>
    <source>
        <tissue>Trachea</tissue>
    </source>
</reference>
<reference evidence="21" key="7">
    <citation type="journal article" date="2006" name="Nature">
        <title>Human chromosome 11 DNA sequence and analysis including novel gene identification.</title>
        <authorList>
            <person name="Taylor T.D."/>
            <person name="Noguchi H."/>
            <person name="Totoki Y."/>
            <person name="Toyoda A."/>
            <person name="Kuroki Y."/>
            <person name="Dewar K."/>
            <person name="Lloyd C."/>
            <person name="Itoh T."/>
            <person name="Takeda T."/>
            <person name="Kim D.-W."/>
            <person name="She X."/>
            <person name="Barlow K.F."/>
            <person name="Bloom T."/>
            <person name="Bruford E."/>
            <person name="Chang J.L."/>
            <person name="Cuomo C.A."/>
            <person name="Eichler E."/>
            <person name="FitzGerald M.G."/>
            <person name="Jaffe D.B."/>
            <person name="LaButti K."/>
            <person name="Nicol R."/>
            <person name="Park H.-S."/>
            <person name="Seaman C."/>
            <person name="Sougnez C."/>
            <person name="Yang X."/>
            <person name="Zimmer A.R."/>
            <person name="Zody M.C."/>
            <person name="Birren B.W."/>
            <person name="Nusbaum C."/>
            <person name="Fujiyama A."/>
            <person name="Hattori M."/>
            <person name="Rogers J."/>
            <person name="Lander E.S."/>
            <person name="Sakaki Y."/>
        </authorList>
    </citation>
    <scope>NUCLEOTIDE SEQUENCE [LARGE SCALE GENOMIC DNA]</scope>
</reference>
<reference evidence="14 18" key="8">
    <citation type="submission" date="2005-09" db="EMBL/GenBank/DDBJ databases">
        <authorList>
            <person name="Mural R.J."/>
            <person name="Istrail S."/>
            <person name="Sutton G.G."/>
            <person name="Florea L."/>
            <person name="Halpern A.L."/>
            <person name="Mobarry C.M."/>
            <person name="Lippert R."/>
            <person name="Walenz B."/>
            <person name="Shatkay H."/>
            <person name="Dew I."/>
            <person name="Miller J.R."/>
            <person name="Flanigan M.J."/>
            <person name="Edwards N.J."/>
            <person name="Bolanos R."/>
            <person name="Fasulo D."/>
            <person name="Halldorsson B.V."/>
            <person name="Hannenhalli S."/>
            <person name="Turner R."/>
            <person name="Yooseph S."/>
            <person name="Lu F."/>
            <person name="Nusskern D.R."/>
            <person name="Shue B.C."/>
            <person name="Zheng X.H."/>
            <person name="Zhong F."/>
            <person name="Delcher A.L."/>
            <person name="Huson D.H."/>
            <person name="Kravitz S.A."/>
            <person name="Mouchard L."/>
            <person name="Reinert K."/>
            <person name="Remington K.A."/>
            <person name="Clark A.G."/>
            <person name="Waterman M.S."/>
            <person name="Eichler E.E."/>
            <person name="Adams M.D."/>
            <person name="Hunkapiller M.W."/>
            <person name="Myers E.W."/>
            <person name="Venter J.C."/>
        </authorList>
    </citation>
    <scope>NUCLEOTIDE SEQUENCE [LARGE SCALE GENOMIC DNA]</scope>
</reference>
<reference evidence="14 19" key="9">
    <citation type="journal article" date="2004" name="Genome Res.">
        <title>The status, quality, and expansion of the NIH full-length cDNA project: the Mammalian Gene Collection (MGC).</title>
        <authorList>
            <consortium name="The MGC Project Team"/>
        </authorList>
    </citation>
    <scope>NUCLEOTIDE SEQUENCE [LARGE SCALE MRNA] (ISOFORM 1)</scope>
    <source>
        <tissue evidence="19">Skin</tissue>
    </source>
</reference>
<reference evidence="14" key="10">
    <citation type="journal article" date="2002" name="Am. J. Respir. Cell Mol. Biol.">
        <title>Constitutive and cytokine-induced expression of the ETS transcription factor ESE-3 in the lung.</title>
        <authorList>
            <person name="Silverman E.S."/>
            <person name="Baron R.M."/>
            <person name="Palmer L.J."/>
            <person name="Le L."/>
            <person name="Hallock A."/>
            <person name="Subramaniam V."/>
            <person name="Riese R.J."/>
            <person name="McKenna M.D."/>
            <person name="Gu X."/>
            <person name="Libermann T.A."/>
            <person name="Tugores A."/>
            <person name="Haley K.J."/>
            <person name="Shore S."/>
            <person name="Drazen J.M."/>
            <person name="Weiss S.T."/>
        </authorList>
    </citation>
    <scope>FUNCTION</scope>
    <scope>SUBCELLULAR LOCATION</scope>
    <scope>TISSUE SPECIFICITY</scope>
    <scope>INDUCTION</scope>
</reference>
<reference evidence="14" key="11">
    <citation type="journal article" date="2006" name="Biochem. Biophys. Res. Commun.">
        <title>ESE-3 transcription factor is involved in the expression of death receptor (DR)-5 through putative Ets sites.</title>
        <authorList>
            <person name="Lim J.H."/>
            <person name="Cho J.-Y."/>
            <person name="Park Y.B."/>
            <person name="Park J.-W."/>
            <person name="Kwon T.K."/>
        </authorList>
    </citation>
    <scope>FUNCTION</scope>
</reference>
<reference evidence="14" key="12">
    <citation type="journal article" date="2006" name="Blood">
        <title>Epithelial-specific transcription factor ESE-3 is involved in the development of monocyte-derived DCs.</title>
        <authorList>
            <person name="Appel S."/>
            <person name="Bringmann A."/>
            <person name="Grunebach F."/>
            <person name="Weck M.M."/>
            <person name="Bauer J."/>
            <person name="Brossart P."/>
        </authorList>
    </citation>
    <scope>INDUCTION</scope>
</reference>
<protein>
    <recommendedName>
        <fullName>ETS homologous factor</fullName>
        <shortName>hEHF</shortName>
    </recommendedName>
    <alternativeName>
        <fullName>ETS domain-containing transcription factor</fullName>
    </alternativeName>
    <alternativeName>
        <fullName>Epithelium-specific Ets transcription factor 3</fullName>
        <shortName>ESE-3</shortName>
    </alternativeName>
</protein>
<keyword id="KW-0025">Alternative splicing</keyword>
<keyword id="KW-0238">DNA-binding</keyword>
<keyword id="KW-0539">Nucleus</keyword>
<keyword id="KW-1267">Proteomics identification</keyword>
<keyword id="KW-1185">Reference proteome</keyword>
<keyword id="KW-0804">Transcription</keyword>
<keyword id="KW-0805">Transcription regulation</keyword>
<proteinExistence type="evidence at protein level"/>
<accession>Q9NZC4</accession>
<accession>D3DR08</accession>
<accession>D3DR10</accession>
<accession>E9PSB2</accession>
<accession>Q9H509</accession>
<accession>Q9UKF9</accession>
<accession>Q9Y5V4</accession>
<accession>Q9Y5V5</accession>
<comment type="function">
    <text evidence="6 7 8 9 11">Transcriptional activator that may play a role in regulating epithelial cell differentiation and proliferation. May act as a repressor for a specific subset of ETS/AP-1-responsive genes and as a modulator of the nuclear response to mitogen-activated protein kinase signaling cascades. Binds to DNA sequences containing the consensus nucleotide core sequence GGAA. Involved in regulation of TNFRSF10B/DR5 expression through Ets-binding sequences on the TNFRSF10B/DR5 promoter. May contribute to development and carcinogenesis by acting as a tumor suppressor gene or anti-oncogene.</text>
</comment>
<comment type="interaction">
    <interactant intactId="EBI-1053347">
        <id>Q9NZC4</id>
    </interactant>
    <interactant intactId="EBI-10981970">
        <id>Q5T749</id>
        <label>KPRP</label>
    </interactant>
    <organismsDiffer>false</organismsDiffer>
    <experiments>2</experiments>
</comment>
<comment type="subcellular location">
    <subcellularLocation>
        <location evidence="3 8 9">Nucleus</location>
    </subcellularLocation>
</comment>
<comment type="alternative products">
    <event type="alternative splicing"/>
    <isoform>
        <id>Q9NZC4-1</id>
        <name evidence="6 7 8">1</name>
        <name evidence="7">ESE-3B</name>
        <sequence type="displayed"/>
    </isoform>
    <isoform>
        <id>Q9NZC4-2</id>
        <name evidence="7">2</name>
        <name evidence="7">ESE-3A</name>
        <sequence type="described" ref="VSP_052190"/>
    </isoform>
    <isoform>
        <id>Q9NZC4-3</id>
        <name>3</name>
        <sequence type="described" ref="VSP_046373"/>
    </isoform>
</comment>
<comment type="tissue specificity">
    <text evidence="6 7 8 9">Expressed exclusively in tissues with a high content of epithelial cells. Highly expressed in salivary gland, mammary gland, prostate, and lung. Weakly expressed in kidney and colon. Not detected in heart, brain, placenta, liver, skeletal muscle, spleen, thymus, testis, ovary, small intestine or peripheral blood leukocytes.</text>
</comment>
<comment type="induction">
    <text evidence="9 10">By IL1B/interleukin-1 beta and TNF in bronchial smooth muscle cells and fibroblasts. By IL10/interleukin-10 and IFNG/IFN-gamma in monocyte-derived dendritic cells.</text>
</comment>
<comment type="domain">
    <text evidence="1">The PNT domain acts as a transcriptional activator.</text>
</comment>
<comment type="similarity">
    <text evidence="2">Belongs to the ETS family.</text>
</comment>
<comment type="online information" name="Atlas of Genetics and Cytogenetics in Oncology and Haematology">
    <link uri="https://atlasgeneticsoncology.org/gene/40421/EHF"/>
</comment>
<dbReference type="EMBL" id="AF170583">
    <property type="protein sequence ID" value="AAF06998.1"/>
    <property type="molecule type" value="mRNA"/>
</dbReference>
<dbReference type="EMBL" id="AF124438">
    <property type="protein sequence ID" value="AAD30990.1"/>
    <property type="molecule type" value="mRNA"/>
</dbReference>
<dbReference type="EMBL" id="AF124439">
    <property type="protein sequence ID" value="AAD30991.1"/>
    <property type="molecule type" value="mRNA"/>
</dbReference>
<dbReference type="EMBL" id="AF212848">
    <property type="protein sequence ID" value="AAF61670.1"/>
    <property type="molecule type" value="mRNA"/>
</dbReference>
<dbReference type="EMBL" id="AF203977">
    <property type="protein sequence ID" value="AAG35644.1"/>
    <property type="molecule type" value="mRNA"/>
</dbReference>
<dbReference type="EMBL" id="AY882601">
    <property type="protein sequence ID" value="AAW80658.1"/>
    <property type="molecule type" value="mRNA"/>
</dbReference>
<dbReference type="EMBL" id="AK310867">
    <property type="status" value="NOT_ANNOTATED_CDS"/>
    <property type="molecule type" value="mRNA"/>
</dbReference>
<dbReference type="EMBL" id="AC087783">
    <property type="status" value="NOT_ANNOTATED_CDS"/>
    <property type="molecule type" value="Genomic_DNA"/>
</dbReference>
<dbReference type="EMBL" id="AL157952">
    <property type="protein sequence ID" value="CAC12700.1"/>
    <property type="molecule type" value="Genomic_DNA"/>
</dbReference>
<dbReference type="EMBL" id="AL157952">
    <property type="protein sequence ID" value="CAC12701.1"/>
    <property type="molecule type" value="Genomic_DNA"/>
</dbReference>
<dbReference type="EMBL" id="CH471064">
    <property type="protein sequence ID" value="EAW68162.1"/>
    <property type="molecule type" value="Genomic_DNA"/>
</dbReference>
<dbReference type="EMBL" id="CH471064">
    <property type="protein sequence ID" value="EAW68163.1"/>
    <property type="molecule type" value="Genomic_DNA"/>
</dbReference>
<dbReference type="EMBL" id="CH471064">
    <property type="protein sequence ID" value="EAW68164.1"/>
    <property type="molecule type" value="Genomic_DNA"/>
</dbReference>
<dbReference type="EMBL" id="CH471064">
    <property type="protein sequence ID" value="EAW68165.1"/>
    <property type="molecule type" value="Genomic_DNA"/>
</dbReference>
<dbReference type="EMBL" id="CH471064">
    <property type="protein sequence ID" value="EAW68166.1"/>
    <property type="molecule type" value="Genomic_DNA"/>
</dbReference>
<dbReference type="EMBL" id="BC038995">
    <property type="protein sequence ID" value="AAH38995.1"/>
    <property type="molecule type" value="mRNA"/>
</dbReference>
<dbReference type="CCDS" id="CCDS55752.1">
    <molecule id="Q9NZC4-3"/>
</dbReference>
<dbReference type="CCDS" id="CCDS55753.1">
    <molecule id="Q9NZC4-2"/>
</dbReference>
<dbReference type="CCDS" id="CCDS7894.1">
    <molecule id="Q9NZC4-1"/>
</dbReference>
<dbReference type="PIR" id="JC7115">
    <property type="entry name" value="JC7115"/>
</dbReference>
<dbReference type="RefSeq" id="NP_001193544.1">
    <molecule id="Q9NZC4-2"/>
    <property type="nucleotide sequence ID" value="NM_001206615.2"/>
</dbReference>
<dbReference type="RefSeq" id="NP_001193545.1">
    <molecule id="Q9NZC4-3"/>
    <property type="nucleotide sequence ID" value="NM_001206616.2"/>
</dbReference>
<dbReference type="RefSeq" id="NP_001364970.1">
    <molecule id="Q9NZC4-1"/>
    <property type="nucleotide sequence ID" value="NM_001378041.1"/>
</dbReference>
<dbReference type="RefSeq" id="NP_001364971.1">
    <molecule id="Q9NZC4-1"/>
    <property type="nucleotide sequence ID" value="NM_001378042.1"/>
</dbReference>
<dbReference type="RefSeq" id="NP_001364972.1">
    <molecule id="Q9NZC4-1"/>
    <property type="nucleotide sequence ID" value="NM_001378043.1"/>
</dbReference>
<dbReference type="RefSeq" id="NP_001364973.1">
    <molecule id="Q9NZC4-1"/>
    <property type="nucleotide sequence ID" value="NM_001378044.1"/>
</dbReference>
<dbReference type="RefSeq" id="NP_001364974.1">
    <molecule id="Q9NZC4-1"/>
    <property type="nucleotide sequence ID" value="NM_001378045.1"/>
</dbReference>
<dbReference type="RefSeq" id="NP_001364975.1">
    <molecule id="Q9NZC4-1"/>
    <property type="nucleotide sequence ID" value="NM_001378046.1"/>
</dbReference>
<dbReference type="RefSeq" id="NP_001364976.1">
    <molecule id="Q9NZC4-1"/>
    <property type="nucleotide sequence ID" value="NM_001378047.1"/>
</dbReference>
<dbReference type="RefSeq" id="NP_001364977.1">
    <molecule id="Q9NZC4-2"/>
    <property type="nucleotide sequence ID" value="NM_001378048.1"/>
</dbReference>
<dbReference type="RefSeq" id="NP_036285.2">
    <molecule id="Q9NZC4-1"/>
    <property type="nucleotide sequence ID" value="NM_012153.5"/>
</dbReference>
<dbReference type="RefSeq" id="XP_005252917.1">
    <property type="nucleotide sequence ID" value="XM_005252860.1"/>
</dbReference>
<dbReference type="RefSeq" id="XP_005252919.1">
    <property type="nucleotide sequence ID" value="XM_005252862.1"/>
</dbReference>
<dbReference type="RefSeq" id="XP_011518286.1">
    <property type="nucleotide sequence ID" value="XM_011519984.1"/>
</dbReference>
<dbReference type="RefSeq" id="XP_011518287.1">
    <property type="nucleotide sequence ID" value="XM_011519985.1"/>
</dbReference>
<dbReference type="RefSeq" id="XP_024304202.1">
    <molecule id="Q9NZC4-1"/>
    <property type="nucleotide sequence ID" value="XM_024448434.2"/>
</dbReference>
<dbReference type="RefSeq" id="XP_047282709.1">
    <molecule id="Q9NZC4-1"/>
    <property type="nucleotide sequence ID" value="XM_047426753.1"/>
</dbReference>
<dbReference type="RefSeq" id="XP_047282710.1">
    <molecule id="Q9NZC4-1"/>
    <property type="nucleotide sequence ID" value="XM_047426754.1"/>
</dbReference>
<dbReference type="RefSeq" id="XP_047282711.1">
    <molecule id="Q9NZC4-1"/>
    <property type="nucleotide sequence ID" value="XM_047426755.1"/>
</dbReference>
<dbReference type="RefSeq" id="XP_047282712.1">
    <molecule id="Q9NZC4-1"/>
    <property type="nucleotide sequence ID" value="XM_047426756.1"/>
</dbReference>
<dbReference type="RefSeq" id="XP_047282713.1">
    <molecule id="Q9NZC4-1"/>
    <property type="nucleotide sequence ID" value="XM_047426757.1"/>
</dbReference>
<dbReference type="RefSeq" id="XP_047282714.1">
    <molecule id="Q9NZC4-1"/>
    <property type="nucleotide sequence ID" value="XM_047426758.1"/>
</dbReference>
<dbReference type="RefSeq" id="XP_047282715.1">
    <molecule id="Q9NZC4-1"/>
    <property type="nucleotide sequence ID" value="XM_047426759.1"/>
</dbReference>
<dbReference type="RefSeq" id="XP_047282718.1">
    <molecule id="Q9NZC4-2"/>
    <property type="nucleotide sequence ID" value="XM_047426762.1"/>
</dbReference>
<dbReference type="RefSeq" id="XP_054224372.1">
    <molecule id="Q9NZC4-1"/>
    <property type="nucleotide sequence ID" value="XM_054368397.1"/>
</dbReference>
<dbReference type="RefSeq" id="XP_054224373.1">
    <molecule id="Q9NZC4-1"/>
    <property type="nucleotide sequence ID" value="XM_054368398.1"/>
</dbReference>
<dbReference type="RefSeq" id="XP_054224374.1">
    <molecule id="Q9NZC4-1"/>
    <property type="nucleotide sequence ID" value="XM_054368399.1"/>
</dbReference>
<dbReference type="RefSeq" id="XP_054224375.1">
    <molecule id="Q9NZC4-1"/>
    <property type="nucleotide sequence ID" value="XM_054368400.1"/>
</dbReference>
<dbReference type="RefSeq" id="XP_054224376.1">
    <molecule id="Q9NZC4-1"/>
    <property type="nucleotide sequence ID" value="XM_054368401.1"/>
</dbReference>
<dbReference type="RefSeq" id="XP_054224377.1">
    <molecule id="Q9NZC4-1"/>
    <property type="nucleotide sequence ID" value="XM_054368402.1"/>
</dbReference>
<dbReference type="RefSeq" id="XP_054224378.1">
    <molecule id="Q9NZC4-1"/>
    <property type="nucleotide sequence ID" value="XM_054368403.1"/>
</dbReference>
<dbReference type="RefSeq" id="XP_054224379.1">
    <molecule id="Q9NZC4-1"/>
    <property type="nucleotide sequence ID" value="XM_054368404.1"/>
</dbReference>
<dbReference type="RefSeq" id="XP_054224383.1">
    <molecule id="Q9NZC4-2"/>
    <property type="nucleotide sequence ID" value="XM_054368408.1"/>
</dbReference>
<dbReference type="SMR" id="Q9NZC4"/>
<dbReference type="BioGRID" id="117675">
    <property type="interactions" value="13"/>
</dbReference>
<dbReference type="FunCoup" id="Q9NZC4">
    <property type="interactions" value="1729"/>
</dbReference>
<dbReference type="IntAct" id="Q9NZC4">
    <property type="interactions" value="5"/>
</dbReference>
<dbReference type="MINT" id="Q9NZC4"/>
<dbReference type="STRING" id="9606.ENSP00000435835"/>
<dbReference type="iPTMnet" id="Q9NZC4"/>
<dbReference type="PhosphoSitePlus" id="Q9NZC4"/>
<dbReference type="BioMuta" id="EHF"/>
<dbReference type="DMDM" id="74762761"/>
<dbReference type="jPOST" id="Q9NZC4"/>
<dbReference type="MassIVE" id="Q9NZC4"/>
<dbReference type="PaxDb" id="9606-ENSP00000435835"/>
<dbReference type="PeptideAtlas" id="Q9NZC4"/>
<dbReference type="ProteomicsDB" id="23565"/>
<dbReference type="ProteomicsDB" id="83362">
    <molecule id="Q9NZC4-1"/>
</dbReference>
<dbReference type="ProteomicsDB" id="83363">
    <molecule id="Q9NZC4-2"/>
</dbReference>
<dbReference type="Antibodypedia" id="13027">
    <property type="antibodies" value="136 antibodies from 22 providers"/>
</dbReference>
<dbReference type="DNASU" id="26298"/>
<dbReference type="Ensembl" id="ENST00000257831.8">
    <molecule id="Q9NZC4-1"/>
    <property type="protein sequence ID" value="ENSP00000257831.3"/>
    <property type="gene ID" value="ENSG00000135373.13"/>
</dbReference>
<dbReference type="Ensembl" id="ENST00000450654.6">
    <molecule id="Q9NZC4-2"/>
    <property type="protein sequence ID" value="ENSP00000399733.2"/>
    <property type="gene ID" value="ENSG00000135373.13"/>
</dbReference>
<dbReference type="Ensembl" id="ENST00000530286.5">
    <molecule id="Q9NZC4-1"/>
    <property type="protein sequence ID" value="ENSP00000433508.1"/>
    <property type="gene ID" value="ENSG00000135373.13"/>
</dbReference>
<dbReference type="Ensembl" id="ENST00000531794.5">
    <molecule id="Q9NZC4-3"/>
    <property type="protein sequence ID" value="ENSP00000435835.1"/>
    <property type="gene ID" value="ENSG00000135373.13"/>
</dbReference>
<dbReference type="Ensembl" id="ENST00000533754.5">
    <molecule id="Q9NZC4-1"/>
    <property type="protein sequence ID" value="ENSP00000435837.1"/>
    <property type="gene ID" value="ENSG00000135373.13"/>
</dbReference>
<dbReference type="GeneID" id="26298"/>
<dbReference type="KEGG" id="hsa:26298"/>
<dbReference type="MANE-Select" id="ENST00000257831.8">
    <property type="protein sequence ID" value="ENSP00000257831.3"/>
    <property type="RefSeq nucleotide sequence ID" value="NM_012153.6"/>
    <property type="RefSeq protein sequence ID" value="NP_036285.2"/>
</dbReference>
<dbReference type="UCSC" id="uc001mvr.3">
    <molecule id="Q9NZC4-1"/>
    <property type="organism name" value="human"/>
</dbReference>
<dbReference type="AGR" id="HGNC:3246"/>
<dbReference type="CTD" id="26298"/>
<dbReference type="DisGeNET" id="26298"/>
<dbReference type="GeneCards" id="EHF"/>
<dbReference type="HGNC" id="HGNC:3246">
    <property type="gene designation" value="EHF"/>
</dbReference>
<dbReference type="HPA" id="ENSG00000135373">
    <property type="expression patterns" value="Tissue enhanced (salivary)"/>
</dbReference>
<dbReference type="MIM" id="605439">
    <property type="type" value="gene"/>
</dbReference>
<dbReference type="neXtProt" id="NX_Q9NZC4"/>
<dbReference type="OpenTargets" id="ENSG00000135373"/>
<dbReference type="PharmGKB" id="PA27681"/>
<dbReference type="VEuPathDB" id="HostDB:ENSG00000135373"/>
<dbReference type="eggNOG" id="KOG3804">
    <property type="taxonomic scope" value="Eukaryota"/>
</dbReference>
<dbReference type="GeneTree" id="ENSGT00940000159310"/>
<dbReference type="HOGENOM" id="CLU_048172_0_0_1"/>
<dbReference type="InParanoid" id="Q9NZC4"/>
<dbReference type="OrthoDB" id="5961210at2759"/>
<dbReference type="PAN-GO" id="Q9NZC4">
    <property type="GO annotations" value="4 GO annotations based on evolutionary models"/>
</dbReference>
<dbReference type="PhylomeDB" id="Q9NZC4"/>
<dbReference type="TreeFam" id="TF318679"/>
<dbReference type="PathwayCommons" id="Q9NZC4"/>
<dbReference type="SignaLink" id="Q9NZC4"/>
<dbReference type="SIGNOR" id="Q9NZC4"/>
<dbReference type="BioGRID-ORCS" id="26298">
    <property type="hits" value="13 hits in 1167 CRISPR screens"/>
</dbReference>
<dbReference type="ChiTaRS" id="EHF">
    <property type="organism name" value="human"/>
</dbReference>
<dbReference type="GeneWiki" id="EHF_(gene)"/>
<dbReference type="GenomeRNAi" id="26298"/>
<dbReference type="Pharos" id="Q9NZC4">
    <property type="development level" value="Tbio"/>
</dbReference>
<dbReference type="PRO" id="PR:Q9NZC4"/>
<dbReference type="Proteomes" id="UP000005640">
    <property type="component" value="Chromosome 11"/>
</dbReference>
<dbReference type="RNAct" id="Q9NZC4">
    <property type="molecule type" value="protein"/>
</dbReference>
<dbReference type="Bgee" id="ENSG00000135373">
    <property type="expression patterns" value="Expressed in parotid gland and 146 other cell types or tissues"/>
</dbReference>
<dbReference type="ExpressionAtlas" id="Q9NZC4">
    <property type="expression patterns" value="baseline and differential"/>
</dbReference>
<dbReference type="GO" id="GO:0000785">
    <property type="term" value="C:chromatin"/>
    <property type="evidence" value="ECO:0000247"/>
    <property type="project" value="NTNU_SB"/>
</dbReference>
<dbReference type="GO" id="GO:0005794">
    <property type="term" value="C:Golgi apparatus"/>
    <property type="evidence" value="ECO:0000314"/>
    <property type="project" value="HPA"/>
</dbReference>
<dbReference type="GO" id="GO:0005654">
    <property type="term" value="C:nucleoplasm"/>
    <property type="evidence" value="ECO:0000314"/>
    <property type="project" value="HPA"/>
</dbReference>
<dbReference type="GO" id="GO:0005634">
    <property type="term" value="C:nucleus"/>
    <property type="evidence" value="ECO:0000318"/>
    <property type="project" value="GO_Central"/>
</dbReference>
<dbReference type="GO" id="GO:0003677">
    <property type="term" value="F:DNA binding"/>
    <property type="evidence" value="ECO:0000314"/>
    <property type="project" value="UniProtKB"/>
</dbReference>
<dbReference type="GO" id="GO:0001228">
    <property type="term" value="F:DNA-binding transcription activator activity, RNA polymerase II-specific"/>
    <property type="evidence" value="ECO:0000314"/>
    <property type="project" value="UniProtKB"/>
</dbReference>
<dbReference type="GO" id="GO:0000981">
    <property type="term" value="F:DNA-binding transcription factor activity, RNA polymerase II-specific"/>
    <property type="evidence" value="ECO:0000247"/>
    <property type="project" value="NTNU_SB"/>
</dbReference>
<dbReference type="GO" id="GO:0000978">
    <property type="term" value="F:RNA polymerase II cis-regulatory region sequence-specific DNA binding"/>
    <property type="evidence" value="ECO:0000314"/>
    <property type="project" value="NTNU_SB"/>
</dbReference>
<dbReference type="GO" id="GO:0030154">
    <property type="term" value="P:cell differentiation"/>
    <property type="evidence" value="ECO:0000318"/>
    <property type="project" value="GO_Central"/>
</dbReference>
<dbReference type="GO" id="GO:0030855">
    <property type="term" value="P:epithelial cell differentiation"/>
    <property type="evidence" value="ECO:0000270"/>
    <property type="project" value="UniProtKB"/>
</dbReference>
<dbReference type="GO" id="GO:0045944">
    <property type="term" value="P:positive regulation of transcription by RNA polymerase II"/>
    <property type="evidence" value="ECO:0000314"/>
    <property type="project" value="UniProtKB"/>
</dbReference>
<dbReference type="GO" id="GO:0006357">
    <property type="term" value="P:regulation of transcription by RNA polymerase II"/>
    <property type="evidence" value="ECO:0000318"/>
    <property type="project" value="GO_Central"/>
</dbReference>
<dbReference type="CDD" id="cd08539">
    <property type="entry name" value="SAM_PNT-ESE-3-like"/>
    <property type="match status" value="1"/>
</dbReference>
<dbReference type="FunFam" id="1.10.10.10:FF:000136">
    <property type="entry name" value="ETS homologous factor isoform X1"/>
    <property type="match status" value="1"/>
</dbReference>
<dbReference type="FunFam" id="1.10.150.50:FF:000026">
    <property type="entry name" value="ETS homologous factor isoform X1"/>
    <property type="match status" value="1"/>
</dbReference>
<dbReference type="Gene3D" id="1.10.150.50">
    <property type="entry name" value="Transcription Factor, Ets-1"/>
    <property type="match status" value="1"/>
</dbReference>
<dbReference type="Gene3D" id="1.10.10.10">
    <property type="entry name" value="Winged helix-like DNA-binding domain superfamily/Winged helix DNA-binding domain"/>
    <property type="match status" value="1"/>
</dbReference>
<dbReference type="InterPro" id="IPR033071">
    <property type="entry name" value="EHF_SAM_Pointed_dom"/>
</dbReference>
<dbReference type="InterPro" id="IPR000418">
    <property type="entry name" value="Ets_dom"/>
</dbReference>
<dbReference type="InterPro" id="IPR046328">
    <property type="entry name" value="ETS_fam"/>
</dbReference>
<dbReference type="InterPro" id="IPR003118">
    <property type="entry name" value="Pointed_dom"/>
</dbReference>
<dbReference type="InterPro" id="IPR013761">
    <property type="entry name" value="SAM/pointed_sf"/>
</dbReference>
<dbReference type="InterPro" id="IPR036388">
    <property type="entry name" value="WH-like_DNA-bd_sf"/>
</dbReference>
<dbReference type="InterPro" id="IPR036390">
    <property type="entry name" value="WH_DNA-bd_sf"/>
</dbReference>
<dbReference type="PANTHER" id="PTHR11849">
    <property type="entry name" value="ETS"/>
    <property type="match status" value="1"/>
</dbReference>
<dbReference type="PANTHER" id="PTHR11849:SF171">
    <property type="entry name" value="ETS HOMOLOGOUS FACTOR"/>
    <property type="match status" value="1"/>
</dbReference>
<dbReference type="Pfam" id="PF00178">
    <property type="entry name" value="Ets"/>
    <property type="match status" value="1"/>
</dbReference>
<dbReference type="Pfam" id="PF02198">
    <property type="entry name" value="SAM_PNT"/>
    <property type="match status" value="1"/>
</dbReference>
<dbReference type="PRINTS" id="PR00454">
    <property type="entry name" value="ETSDOMAIN"/>
</dbReference>
<dbReference type="SMART" id="SM00413">
    <property type="entry name" value="ETS"/>
    <property type="match status" value="1"/>
</dbReference>
<dbReference type="SMART" id="SM00251">
    <property type="entry name" value="SAM_PNT"/>
    <property type="match status" value="1"/>
</dbReference>
<dbReference type="SUPFAM" id="SSF47769">
    <property type="entry name" value="SAM/Pointed domain"/>
    <property type="match status" value="1"/>
</dbReference>
<dbReference type="SUPFAM" id="SSF46785">
    <property type="entry name" value="Winged helix' DNA-binding domain"/>
    <property type="match status" value="1"/>
</dbReference>
<dbReference type="PROSITE" id="PS50061">
    <property type="entry name" value="ETS_DOMAIN_3"/>
    <property type="match status" value="1"/>
</dbReference>
<dbReference type="PROSITE" id="PS51433">
    <property type="entry name" value="PNT"/>
    <property type="match status" value="1"/>
</dbReference>
<name>EHF_HUMAN</name>
<evidence type="ECO:0000250" key="1">
    <source>
        <dbReference type="UniProtKB" id="O70273"/>
    </source>
</evidence>
<evidence type="ECO:0000255" key="2"/>
<evidence type="ECO:0000255" key="3">
    <source>
        <dbReference type="PROSITE-ProRule" id="PRU00237"/>
    </source>
</evidence>
<evidence type="ECO:0000255" key="4">
    <source>
        <dbReference type="PROSITE-ProRule" id="PRU00762"/>
    </source>
</evidence>
<evidence type="ECO:0000256" key="5">
    <source>
        <dbReference type="SAM" id="MobiDB-lite"/>
    </source>
</evidence>
<evidence type="ECO:0000269" key="6">
    <source>
    </source>
</evidence>
<evidence type="ECO:0000269" key="7">
    <source>
    </source>
</evidence>
<evidence type="ECO:0000269" key="8">
    <source>
    </source>
</evidence>
<evidence type="ECO:0000269" key="9">
    <source>
    </source>
</evidence>
<evidence type="ECO:0000269" key="10">
    <source>
    </source>
</evidence>
<evidence type="ECO:0000269" key="11">
    <source>
    </source>
</evidence>
<evidence type="ECO:0000303" key="12">
    <source>
    </source>
</evidence>
<evidence type="ECO:0000303" key="13">
    <source>
    </source>
</evidence>
<evidence type="ECO:0000305" key="14"/>
<evidence type="ECO:0000312" key="15">
    <source>
        <dbReference type="EMBL" id="AAD30991.1"/>
    </source>
</evidence>
<evidence type="ECO:0000312" key="16">
    <source>
        <dbReference type="EMBL" id="AAF06998.1"/>
    </source>
</evidence>
<evidence type="ECO:0000312" key="17">
    <source>
        <dbReference type="EMBL" id="AAF61670.1"/>
    </source>
</evidence>
<evidence type="ECO:0000312" key="18">
    <source>
        <dbReference type="EMBL" id="AAG35644.1"/>
    </source>
</evidence>
<evidence type="ECO:0000312" key="19">
    <source>
        <dbReference type="EMBL" id="AAH38995.1"/>
    </source>
</evidence>
<evidence type="ECO:0000312" key="20">
    <source>
        <dbReference type="EMBL" id="AAW80658.1"/>
    </source>
</evidence>
<evidence type="ECO:0000312" key="21">
    <source>
        <dbReference type="EMBL" id="CAC12701.1"/>
    </source>
</evidence>
<evidence type="ECO:0000312" key="22">
    <source>
        <dbReference type="HGNC" id="HGNC:3246"/>
    </source>
</evidence>
<evidence type="ECO:0000312" key="23">
    <source>
        <dbReference type="PIR" id="JC7115"/>
    </source>
</evidence>
<gene>
    <name evidence="22" type="primary">EHF</name>
    <name type="synonym">ESE3</name>
    <name evidence="20" type="synonym">ESE3B</name>
    <name evidence="17" type="synonym">ESEJ</name>
</gene>